<geneLocation type="plasmid">
    <name>megaplasmid Rsp</name>
</geneLocation>
<protein>
    <recommendedName>
        <fullName evidence="1 2">Type 3 secretion system secretin</fullName>
        <shortName evidence="1 2">T3SS secretin</shortName>
    </recommendedName>
    <alternativeName>
        <fullName>Hypersensitivity response secretion protein HrpA</fullName>
    </alternativeName>
</protein>
<feature type="signal peptide" evidence="2">
    <location>
        <begin position="1"/>
        <end position="15"/>
    </location>
</feature>
<feature type="chain" id="PRO_0000013109" description="Type 3 secretion system secretin" evidence="2">
    <location>
        <begin position="16"/>
        <end position="568"/>
    </location>
</feature>
<feature type="region of interest" description="Disordered" evidence="3">
    <location>
        <begin position="203"/>
        <end position="292"/>
    </location>
</feature>
<feature type="compositionally biased region" description="Gly residues" evidence="3">
    <location>
        <begin position="243"/>
        <end position="257"/>
    </location>
</feature>
<feature type="compositionally biased region" description="Basic and acidic residues" evidence="3">
    <location>
        <begin position="273"/>
        <end position="284"/>
    </location>
</feature>
<accession>Q52498</accession>
<comment type="function">
    <text evidence="2">Component of the type III secretion system (T3SS), also called injectisome, which is used to inject bacterial effector proteins into eukaryotic host cells. Forms a ring-shaped multimeric structure with an apparent central pore in the outer membrane.</text>
</comment>
<comment type="subunit">
    <text evidence="2">The core secretion machinery of the T3SS is composed of approximately 20 different proteins, including cytoplasmic components, a base, an export apparatus and a needle. This subunit is part of the base, which anchors the injectisome in the bacterial cell envelope. Forms a stable homooligomeric complex.</text>
</comment>
<comment type="subcellular location">
    <subcellularLocation>
        <location evidence="2">Cell outer membrane</location>
    </subcellularLocation>
</comment>
<comment type="similarity">
    <text evidence="2 6">Belongs to the bacterial secretin family. T3SS SctC subfamily.</text>
</comment>
<reference key="1">
    <citation type="journal article" date="1992" name="Mol. Plant Microbe Interact.">
        <title>hrp genes of Pseudomonas solanacearum are homologous to pathogenicity determinants of animal pathogenic bacteria and are conserved among plant pathogenic bacteria.</title>
        <authorList>
            <person name="Gough C.L."/>
            <person name="Genin S."/>
            <person name="Zischek C."/>
            <person name="Boucher C.A."/>
        </authorList>
    </citation>
    <scope>NUCLEOTIDE SEQUENCE [GENOMIC DNA]</scope>
    <source>
        <strain>ATCC BAA-1114 / GMI1000</strain>
    </source>
</reference>
<reference key="2">
    <citation type="journal article" date="1995" name="Mol. Microbiol.">
        <title>The hrp gene locus of Pseudomonas solanacearum, which controls the production of a type III secretion system, encodes eight proteins related to components of the bacterial flagellar biogenesis complex.</title>
        <authorList>
            <person name="van Gijsegem F."/>
            <person name="Gough C.L."/>
            <person name="Zischek C."/>
            <person name="Niqueux E."/>
            <person name="Arlat M."/>
            <person name="Genin S."/>
            <person name="Barberis P."/>
            <person name="German S."/>
            <person name="Castello P."/>
            <person name="Boucher C.A."/>
        </authorList>
    </citation>
    <scope>NUCLEOTIDE SEQUENCE [GENOMIC DNA]</scope>
    <source>
        <strain>ATCC BAA-1114 / GMI1000</strain>
    </source>
</reference>
<reference key="3">
    <citation type="journal article" date="2002" name="Nature">
        <title>Genome sequence of the plant pathogen Ralstonia solanacearum.</title>
        <authorList>
            <person name="Salanoubat M."/>
            <person name="Genin S."/>
            <person name="Artiguenave F."/>
            <person name="Gouzy J."/>
            <person name="Mangenot S."/>
            <person name="Arlat M."/>
            <person name="Billault A."/>
            <person name="Brottier P."/>
            <person name="Camus J.-C."/>
            <person name="Cattolico L."/>
            <person name="Chandler M."/>
            <person name="Choisne N."/>
            <person name="Claudel-Renard C."/>
            <person name="Cunnac S."/>
            <person name="Demange N."/>
            <person name="Gaspin C."/>
            <person name="Lavie M."/>
            <person name="Moisan A."/>
            <person name="Robert C."/>
            <person name="Saurin W."/>
            <person name="Schiex T."/>
            <person name="Siguier P."/>
            <person name="Thebault P."/>
            <person name="Whalen M."/>
            <person name="Wincker P."/>
            <person name="Levy M."/>
            <person name="Weissenbach J."/>
            <person name="Boucher C.A."/>
        </authorList>
    </citation>
    <scope>NUCLEOTIDE SEQUENCE [LARGE SCALE GENOMIC DNA]</scope>
    <source>
        <strain>ATCC BAA-1114 / GMI1000</strain>
    </source>
</reference>
<dbReference type="EMBL" id="AJ245811">
    <property type="protein sequence ID" value="CAB58261.1"/>
    <property type="molecule type" value="Genomic_DNA"/>
</dbReference>
<dbReference type="EMBL" id="M99361">
    <property type="status" value="NOT_ANNOTATED_CDS"/>
    <property type="molecule type" value="Genomic_DNA"/>
</dbReference>
<dbReference type="EMBL" id="AL646053">
    <property type="protein sequence ID" value="CAD18025.1"/>
    <property type="molecule type" value="Genomic_DNA"/>
</dbReference>
<dbReference type="RefSeq" id="WP_011004171.1">
    <property type="nucleotide sequence ID" value="NC_003296.1"/>
</dbReference>
<dbReference type="SMR" id="Q52498"/>
<dbReference type="STRING" id="267608.RSp0874"/>
<dbReference type="EnsemblBacteria" id="CAD18025">
    <property type="protein sequence ID" value="CAD18025"/>
    <property type="gene ID" value="RSp0874"/>
</dbReference>
<dbReference type="KEGG" id="rso:RSp0874"/>
<dbReference type="PATRIC" id="fig|267608.8.peg.4344"/>
<dbReference type="eggNOG" id="COG1450">
    <property type="taxonomic scope" value="Bacteria"/>
</dbReference>
<dbReference type="HOGENOM" id="CLU_022474_2_0_4"/>
<dbReference type="Proteomes" id="UP000001436">
    <property type="component" value="Plasmid megaplasmid Rsp"/>
</dbReference>
<dbReference type="GO" id="GO:0009279">
    <property type="term" value="C:cell outer membrane"/>
    <property type="evidence" value="ECO:0007669"/>
    <property type="project" value="UniProtKB-SubCell"/>
</dbReference>
<dbReference type="GO" id="GO:0015627">
    <property type="term" value="C:type II protein secretion system complex"/>
    <property type="evidence" value="ECO:0007669"/>
    <property type="project" value="TreeGrafter"/>
</dbReference>
<dbReference type="GO" id="GO:0030257">
    <property type="term" value="C:type III protein secretion system complex"/>
    <property type="evidence" value="ECO:0007669"/>
    <property type="project" value="UniProtKB-UniRule"/>
</dbReference>
<dbReference type="GO" id="GO:0030254">
    <property type="term" value="P:protein secretion by the type III secretion system"/>
    <property type="evidence" value="ECO:0007669"/>
    <property type="project" value="UniProtKB-UniRule"/>
</dbReference>
<dbReference type="GO" id="GO:0052040">
    <property type="term" value="P:symbiont-mediated perturbation of host programmed cell death"/>
    <property type="evidence" value="ECO:0007669"/>
    <property type="project" value="UniProtKB-KW"/>
</dbReference>
<dbReference type="Gene3D" id="3.30.1370.120">
    <property type="match status" value="2"/>
</dbReference>
<dbReference type="Gene3D" id="3.55.50.30">
    <property type="match status" value="1"/>
</dbReference>
<dbReference type="HAMAP" id="MF_02219">
    <property type="entry name" value="Type_III_secretin"/>
    <property type="match status" value="1"/>
</dbReference>
<dbReference type="InterPro" id="IPR050810">
    <property type="entry name" value="Bact_Secretion_Sys_Channel"/>
</dbReference>
<dbReference type="InterPro" id="IPR005644">
    <property type="entry name" value="NolW-like"/>
</dbReference>
<dbReference type="InterPro" id="IPR038591">
    <property type="entry name" value="NolW-like_sf"/>
</dbReference>
<dbReference type="InterPro" id="IPR004846">
    <property type="entry name" value="T2SS/T3SS_dom"/>
</dbReference>
<dbReference type="InterPro" id="IPR004845">
    <property type="entry name" value="T2SS_GspD_CS"/>
</dbReference>
<dbReference type="InterPro" id="IPR003522">
    <property type="entry name" value="T3SS_OM_pore_YscC"/>
</dbReference>
<dbReference type="NCBIfam" id="TIGR02516">
    <property type="entry name" value="type_III_yscC"/>
    <property type="match status" value="1"/>
</dbReference>
<dbReference type="PANTHER" id="PTHR30332">
    <property type="entry name" value="PROBABLE GENERAL SECRETION PATHWAY PROTEIN D"/>
    <property type="match status" value="1"/>
</dbReference>
<dbReference type="PANTHER" id="PTHR30332:SF5">
    <property type="entry name" value="SPI-1 TYPE 3 SECRETION SYSTEM SECRETIN"/>
    <property type="match status" value="1"/>
</dbReference>
<dbReference type="Pfam" id="PF00263">
    <property type="entry name" value="Secretin"/>
    <property type="match status" value="1"/>
</dbReference>
<dbReference type="Pfam" id="PF03958">
    <property type="entry name" value="Secretin_N"/>
    <property type="match status" value="2"/>
</dbReference>
<dbReference type="PRINTS" id="PR01337">
    <property type="entry name" value="TYPE3OMGPROT"/>
</dbReference>
<dbReference type="PROSITE" id="PS00875">
    <property type="entry name" value="T2SP_D"/>
    <property type="match status" value="1"/>
</dbReference>
<name>SCTC_RALN1</name>
<organism>
    <name type="scientific">Ralstonia nicotianae (strain ATCC BAA-1114 / GMI1000)</name>
    <name type="common">Ralstonia solanacearum</name>
    <dbReference type="NCBI Taxonomy" id="267608"/>
    <lineage>
        <taxon>Bacteria</taxon>
        <taxon>Pseudomonadati</taxon>
        <taxon>Pseudomonadota</taxon>
        <taxon>Betaproteobacteria</taxon>
        <taxon>Burkholderiales</taxon>
        <taxon>Burkholderiaceae</taxon>
        <taxon>Ralstonia</taxon>
        <taxon>Ralstonia solanacearum species complex</taxon>
    </lineage>
</organism>
<keyword id="KW-0998">Cell outer membrane</keyword>
<keyword id="KW-0928">Hypersensitive response elicitation</keyword>
<keyword id="KW-0472">Membrane</keyword>
<keyword id="KW-0614">Plasmid</keyword>
<keyword id="KW-0653">Protein transport</keyword>
<keyword id="KW-1185">Reference proteome</keyword>
<keyword id="KW-0732">Signal</keyword>
<keyword id="KW-0811">Translocation</keyword>
<keyword id="KW-0813">Transport</keyword>
<keyword id="KW-0843">Virulence</keyword>
<gene>
    <name evidence="1 2" type="primary">sctC</name>
    <name evidence="5" type="synonym">hrcC</name>
    <name evidence="4" type="synonym">hrpA</name>
    <name type="ordered locus">RSp0874</name>
    <name type="ORF">RS01645</name>
</gene>
<evidence type="ECO:0000250" key="1">
    <source>
        <dbReference type="UniProtKB" id="Q01244"/>
    </source>
</evidence>
<evidence type="ECO:0000255" key="2">
    <source>
        <dbReference type="HAMAP-Rule" id="MF_02219"/>
    </source>
</evidence>
<evidence type="ECO:0000256" key="3">
    <source>
        <dbReference type="SAM" id="MobiDB-lite"/>
    </source>
</evidence>
<evidence type="ECO:0000303" key="4">
    <source>
    </source>
</evidence>
<evidence type="ECO:0000303" key="5">
    <source>
    </source>
</evidence>
<evidence type="ECO:0000305" key="6"/>
<sequence length="568" mass="60440">MAAALLLWTAGTVCAAPIPWQSQKFEYVADRKDIKEVLRDLGASQHVMTSISTQVEGSVTGSFNETPQKFLDRMAGTFGFAWYYDGAVLRVTSANEAQSATIALTRASTAQVKRALTRMGIADSRFPIQYDDDSGSIVVSGPPRLVELVRDIAQVIDRGREDANRTVVRAFPLRYAWATDHRVTVNGQSVNIRGVASILNSMYGGDGPSDSGTAPRAQDRRLDSVAPGEASAGRAGTRALSSLGGGKSPLPPGGTGQYVGNSGPYAPPPSGENRLRSDELDDRGSTPIIRADPRSNSVLVRDRADRMAAHQSLIESLDSRPAVLEISASIIDISENALEQLGVDWRLHNSRFDLQTGNGTNTMLNNPGSLDSVATTAGAAAAIAATPAGGVLSAVIGGGSRYLMARISALQQTDQARITANPKVATLDNTEAVMDNRQNFYVPVAGYQSADLYAISAGVSLRVLPMVVMDGGTVRIRMNVHIEDGQITSQQVGNLPITSQSEIDTQALINEGDSLLIAGYSVEQQSKSVDAVPGLSKIPLVGALFRTDQTTGKRFQRMFLVTPRVITP</sequence>
<proteinExistence type="inferred from homology"/>